<reference key="1">
    <citation type="journal article" date="2006" name="Science">
        <title>Genome of rice cluster I archaea -- the key methane producers in the rice rhizosphere.</title>
        <authorList>
            <person name="Erkel C."/>
            <person name="Kube M."/>
            <person name="Reinhardt R."/>
            <person name="Liesack W."/>
        </authorList>
    </citation>
    <scope>NUCLEOTIDE SEQUENCE [LARGE SCALE GENOMIC DNA]</scope>
    <source>
        <strain>DSM 22066 / NBRC 105507 / MRE50</strain>
    </source>
</reference>
<evidence type="ECO:0000255" key="1">
    <source>
        <dbReference type="HAMAP-Rule" id="MF_00097"/>
    </source>
</evidence>
<dbReference type="EC" id="2.5.1.3" evidence="1"/>
<dbReference type="EMBL" id="AM114193">
    <property type="protein sequence ID" value="CAJ37725.1"/>
    <property type="molecule type" value="Genomic_DNA"/>
</dbReference>
<dbReference type="RefSeq" id="WP_012034861.1">
    <property type="nucleotide sequence ID" value="NC_009464.1"/>
</dbReference>
<dbReference type="SMR" id="Q0W1L8"/>
<dbReference type="STRING" id="351160.RCIX2678"/>
<dbReference type="GeneID" id="5145458"/>
<dbReference type="KEGG" id="rci:RCIX2678"/>
<dbReference type="PATRIC" id="fig|351160.9.peg.558"/>
<dbReference type="eggNOG" id="arCOG01089">
    <property type="taxonomic scope" value="Archaea"/>
</dbReference>
<dbReference type="OrthoDB" id="85572at2157"/>
<dbReference type="UniPathway" id="UPA00060">
    <property type="reaction ID" value="UER00141"/>
</dbReference>
<dbReference type="Proteomes" id="UP000000663">
    <property type="component" value="Chromosome"/>
</dbReference>
<dbReference type="GO" id="GO:0005737">
    <property type="term" value="C:cytoplasm"/>
    <property type="evidence" value="ECO:0007669"/>
    <property type="project" value="TreeGrafter"/>
</dbReference>
<dbReference type="GO" id="GO:0000287">
    <property type="term" value="F:magnesium ion binding"/>
    <property type="evidence" value="ECO:0007669"/>
    <property type="project" value="UniProtKB-UniRule"/>
</dbReference>
<dbReference type="GO" id="GO:0004789">
    <property type="term" value="F:thiamine-phosphate diphosphorylase activity"/>
    <property type="evidence" value="ECO:0007669"/>
    <property type="project" value="UniProtKB-UniRule"/>
</dbReference>
<dbReference type="GO" id="GO:0009228">
    <property type="term" value="P:thiamine biosynthetic process"/>
    <property type="evidence" value="ECO:0007669"/>
    <property type="project" value="UniProtKB-KW"/>
</dbReference>
<dbReference type="GO" id="GO:0009229">
    <property type="term" value="P:thiamine diphosphate biosynthetic process"/>
    <property type="evidence" value="ECO:0007669"/>
    <property type="project" value="UniProtKB-UniRule"/>
</dbReference>
<dbReference type="CDD" id="cd00564">
    <property type="entry name" value="TMP_TenI"/>
    <property type="match status" value="1"/>
</dbReference>
<dbReference type="FunFam" id="3.20.20.70:FF:000096">
    <property type="entry name" value="Thiamine-phosphate synthase"/>
    <property type="match status" value="1"/>
</dbReference>
<dbReference type="Gene3D" id="3.20.20.70">
    <property type="entry name" value="Aldolase class I"/>
    <property type="match status" value="1"/>
</dbReference>
<dbReference type="HAMAP" id="MF_00097">
    <property type="entry name" value="TMP_synthase"/>
    <property type="match status" value="1"/>
</dbReference>
<dbReference type="InterPro" id="IPR013785">
    <property type="entry name" value="Aldolase_TIM"/>
</dbReference>
<dbReference type="InterPro" id="IPR036206">
    <property type="entry name" value="ThiamineP_synth_sf"/>
</dbReference>
<dbReference type="InterPro" id="IPR022998">
    <property type="entry name" value="ThiamineP_synth_TenI"/>
</dbReference>
<dbReference type="InterPro" id="IPR034291">
    <property type="entry name" value="TMP_synthase"/>
</dbReference>
<dbReference type="NCBIfam" id="TIGR00693">
    <property type="entry name" value="thiE"/>
    <property type="match status" value="1"/>
</dbReference>
<dbReference type="PANTHER" id="PTHR20857">
    <property type="entry name" value="THIAMINE-PHOSPHATE PYROPHOSPHORYLASE"/>
    <property type="match status" value="1"/>
</dbReference>
<dbReference type="PANTHER" id="PTHR20857:SF15">
    <property type="entry name" value="THIAMINE-PHOSPHATE SYNTHASE"/>
    <property type="match status" value="1"/>
</dbReference>
<dbReference type="Pfam" id="PF02581">
    <property type="entry name" value="TMP-TENI"/>
    <property type="match status" value="1"/>
</dbReference>
<dbReference type="SUPFAM" id="SSF51391">
    <property type="entry name" value="Thiamin phosphate synthase"/>
    <property type="match status" value="1"/>
</dbReference>
<keyword id="KW-0460">Magnesium</keyword>
<keyword id="KW-0479">Metal-binding</keyword>
<keyword id="KW-1185">Reference proteome</keyword>
<keyword id="KW-0784">Thiamine biosynthesis</keyword>
<keyword id="KW-0808">Transferase</keyword>
<sequence>MQYDLYVVTDEGLSRGLTHPELARRAIAGSADVIQLRDKKCDCDYLLRCAMEMREDCNKAGVTFIVNDRLDVALQSQADGVHIGQSDMPLKFARRVAPKGFIIGVSAGTVEEALRAEHDGADYIGFGPVFPTGSKADAGPVCGLDLLREVRRRVSIPVVAIGGINAANAPEVLAAGADGLAVISAVVSQEDVTAAARNLKAIISQYRLSGRQ</sequence>
<proteinExistence type="inferred from homology"/>
<gene>
    <name evidence="1" type="primary">thiE</name>
    <name type="ordered locus">UNCMA_05320</name>
    <name type="ORF">RCIX2678</name>
</gene>
<organism>
    <name type="scientific">Methanocella arvoryzae (strain DSM 22066 / NBRC 105507 / MRE50)</name>
    <dbReference type="NCBI Taxonomy" id="351160"/>
    <lineage>
        <taxon>Archaea</taxon>
        <taxon>Methanobacteriati</taxon>
        <taxon>Methanobacteriota</taxon>
        <taxon>Stenosarchaea group</taxon>
        <taxon>Methanomicrobia</taxon>
        <taxon>Methanocellales</taxon>
        <taxon>Methanocellaceae</taxon>
        <taxon>Methanocella</taxon>
    </lineage>
</organism>
<name>THIE_METAR</name>
<feature type="chain" id="PRO_0000336440" description="Thiamine-phosphate synthase">
    <location>
        <begin position="1"/>
        <end position="212"/>
    </location>
</feature>
<feature type="binding site" evidence="1">
    <location>
        <begin position="35"/>
        <end position="39"/>
    </location>
    <ligand>
        <name>4-amino-2-methyl-5-(diphosphooxymethyl)pyrimidine</name>
        <dbReference type="ChEBI" id="CHEBI:57841"/>
    </ligand>
</feature>
<feature type="binding site" evidence="1">
    <location>
        <position position="67"/>
    </location>
    <ligand>
        <name>4-amino-2-methyl-5-(diphosphooxymethyl)pyrimidine</name>
        <dbReference type="ChEBI" id="CHEBI:57841"/>
    </ligand>
</feature>
<feature type="binding site" evidence="1">
    <location>
        <position position="68"/>
    </location>
    <ligand>
        <name>Mg(2+)</name>
        <dbReference type="ChEBI" id="CHEBI:18420"/>
    </ligand>
</feature>
<feature type="binding site" evidence="1">
    <location>
        <position position="87"/>
    </location>
    <ligand>
        <name>Mg(2+)</name>
        <dbReference type="ChEBI" id="CHEBI:18420"/>
    </ligand>
</feature>
<feature type="binding site" evidence="1">
    <location>
        <position position="106"/>
    </location>
    <ligand>
        <name>4-amino-2-methyl-5-(diphosphooxymethyl)pyrimidine</name>
        <dbReference type="ChEBI" id="CHEBI:57841"/>
    </ligand>
</feature>
<feature type="binding site" evidence="1">
    <location>
        <begin position="132"/>
        <end position="134"/>
    </location>
    <ligand>
        <name>2-[(2R,5Z)-2-carboxy-4-methylthiazol-5(2H)-ylidene]ethyl phosphate</name>
        <dbReference type="ChEBI" id="CHEBI:62899"/>
    </ligand>
</feature>
<feature type="binding site" evidence="1">
    <location>
        <position position="135"/>
    </location>
    <ligand>
        <name>4-amino-2-methyl-5-(diphosphooxymethyl)pyrimidine</name>
        <dbReference type="ChEBI" id="CHEBI:57841"/>
    </ligand>
</feature>
<feature type="binding site" evidence="1">
    <location>
        <position position="163"/>
    </location>
    <ligand>
        <name>2-[(2R,5Z)-2-carboxy-4-methylthiazol-5(2H)-ylidene]ethyl phosphate</name>
        <dbReference type="ChEBI" id="CHEBI:62899"/>
    </ligand>
</feature>
<feature type="binding site" evidence="1">
    <location>
        <begin position="183"/>
        <end position="184"/>
    </location>
    <ligand>
        <name>2-[(2R,5Z)-2-carboxy-4-methylthiazol-5(2H)-ylidene]ethyl phosphate</name>
        <dbReference type="ChEBI" id="CHEBI:62899"/>
    </ligand>
</feature>
<comment type="function">
    <text evidence="1">Condenses 4-methyl-5-(beta-hydroxyethyl)thiazole monophosphate (THZ-P) and 2-methyl-4-amino-5-hydroxymethyl pyrimidine pyrophosphate (HMP-PP) to form thiamine monophosphate (TMP).</text>
</comment>
<comment type="catalytic activity">
    <reaction evidence="1">
        <text>2-[(2R,5Z)-2-carboxy-4-methylthiazol-5(2H)-ylidene]ethyl phosphate + 4-amino-2-methyl-5-(diphosphooxymethyl)pyrimidine + 2 H(+) = thiamine phosphate + CO2 + diphosphate</text>
        <dbReference type="Rhea" id="RHEA:47844"/>
        <dbReference type="ChEBI" id="CHEBI:15378"/>
        <dbReference type="ChEBI" id="CHEBI:16526"/>
        <dbReference type="ChEBI" id="CHEBI:33019"/>
        <dbReference type="ChEBI" id="CHEBI:37575"/>
        <dbReference type="ChEBI" id="CHEBI:57841"/>
        <dbReference type="ChEBI" id="CHEBI:62899"/>
        <dbReference type="EC" id="2.5.1.3"/>
    </reaction>
</comment>
<comment type="catalytic activity">
    <reaction evidence="1">
        <text>2-(2-carboxy-4-methylthiazol-5-yl)ethyl phosphate + 4-amino-2-methyl-5-(diphosphooxymethyl)pyrimidine + 2 H(+) = thiamine phosphate + CO2 + diphosphate</text>
        <dbReference type="Rhea" id="RHEA:47848"/>
        <dbReference type="ChEBI" id="CHEBI:15378"/>
        <dbReference type="ChEBI" id="CHEBI:16526"/>
        <dbReference type="ChEBI" id="CHEBI:33019"/>
        <dbReference type="ChEBI" id="CHEBI:37575"/>
        <dbReference type="ChEBI" id="CHEBI:57841"/>
        <dbReference type="ChEBI" id="CHEBI:62890"/>
        <dbReference type="EC" id="2.5.1.3"/>
    </reaction>
</comment>
<comment type="catalytic activity">
    <reaction evidence="1">
        <text>4-methyl-5-(2-phosphooxyethyl)-thiazole + 4-amino-2-methyl-5-(diphosphooxymethyl)pyrimidine + H(+) = thiamine phosphate + diphosphate</text>
        <dbReference type="Rhea" id="RHEA:22328"/>
        <dbReference type="ChEBI" id="CHEBI:15378"/>
        <dbReference type="ChEBI" id="CHEBI:33019"/>
        <dbReference type="ChEBI" id="CHEBI:37575"/>
        <dbReference type="ChEBI" id="CHEBI:57841"/>
        <dbReference type="ChEBI" id="CHEBI:58296"/>
        <dbReference type="EC" id="2.5.1.3"/>
    </reaction>
</comment>
<comment type="cofactor">
    <cofactor evidence="1">
        <name>Mg(2+)</name>
        <dbReference type="ChEBI" id="CHEBI:18420"/>
    </cofactor>
    <text evidence="1">Binds 1 Mg(2+) ion per subunit.</text>
</comment>
<comment type="pathway">
    <text evidence="1">Cofactor biosynthesis; thiamine diphosphate biosynthesis; thiamine phosphate from 4-amino-2-methyl-5-diphosphomethylpyrimidine and 4-methyl-5-(2-phosphoethyl)-thiazole: step 1/1.</text>
</comment>
<comment type="similarity">
    <text evidence="1">Belongs to the thiamine-phosphate synthase family.</text>
</comment>
<protein>
    <recommendedName>
        <fullName evidence="1">Thiamine-phosphate synthase</fullName>
        <shortName evidence="1">TP synthase</shortName>
        <shortName evidence="1">TPS</shortName>
        <ecNumber evidence="1">2.5.1.3</ecNumber>
    </recommendedName>
    <alternativeName>
        <fullName evidence="1">Thiamine-phosphate pyrophosphorylase</fullName>
        <shortName evidence="1">TMP pyrophosphorylase</shortName>
        <shortName evidence="1">TMP-PPase</shortName>
    </alternativeName>
</protein>
<accession>Q0W1L8</accession>